<evidence type="ECO:0000255" key="1">
    <source>
        <dbReference type="HAMAP-Rule" id="MF_00376"/>
    </source>
</evidence>
<evidence type="ECO:0000305" key="2"/>
<evidence type="ECO:0007829" key="3">
    <source>
        <dbReference type="PDB" id="4TTP"/>
    </source>
</evidence>
<evidence type="ECO:0007829" key="4">
    <source>
        <dbReference type="PDB" id="4TTR"/>
    </source>
</evidence>
<comment type="function">
    <text evidence="1">Catalyzes the phosphorylation of the 3'-hydroxyl group of dephosphocoenzyme A to form coenzyme A.</text>
</comment>
<comment type="catalytic activity">
    <reaction evidence="1">
        <text>3'-dephospho-CoA + ATP = ADP + CoA + H(+)</text>
        <dbReference type="Rhea" id="RHEA:18245"/>
        <dbReference type="ChEBI" id="CHEBI:15378"/>
        <dbReference type="ChEBI" id="CHEBI:30616"/>
        <dbReference type="ChEBI" id="CHEBI:57287"/>
        <dbReference type="ChEBI" id="CHEBI:57328"/>
        <dbReference type="ChEBI" id="CHEBI:456216"/>
        <dbReference type="EC" id="2.7.1.24"/>
    </reaction>
</comment>
<comment type="pathway">
    <text evidence="1">Cofactor biosynthesis; coenzyme A biosynthesis; CoA from (R)-pantothenate: step 5/5.</text>
</comment>
<comment type="subcellular location">
    <subcellularLocation>
        <location evidence="1">Cytoplasm</location>
    </subcellularLocation>
</comment>
<comment type="similarity">
    <text evidence="1">Belongs to the CoaE family.</text>
</comment>
<comment type="sequence caution" evidence="2">
    <conflict type="erroneous initiation">
        <sequence resource="EMBL-CDS" id="AAU27549"/>
    </conflict>
</comment>
<reference key="1">
    <citation type="journal article" date="2004" name="Science">
        <title>The genomic sequence of the accidental pathogen Legionella pneumophila.</title>
        <authorList>
            <person name="Chien M."/>
            <person name="Morozova I."/>
            <person name="Shi S."/>
            <person name="Sheng H."/>
            <person name="Chen J."/>
            <person name="Gomez S.M."/>
            <person name="Asamani G."/>
            <person name="Hill K."/>
            <person name="Nuara J."/>
            <person name="Feder M."/>
            <person name="Rineer J."/>
            <person name="Greenberg J.J."/>
            <person name="Steshenko V."/>
            <person name="Park S.H."/>
            <person name="Zhao B."/>
            <person name="Teplitskaya E."/>
            <person name="Edwards J.R."/>
            <person name="Pampou S."/>
            <person name="Georghiou A."/>
            <person name="Chou I.-C."/>
            <person name="Iannuccilli W."/>
            <person name="Ulz M.E."/>
            <person name="Kim D.H."/>
            <person name="Geringer-Sameth A."/>
            <person name="Goldsberry C."/>
            <person name="Morozov P."/>
            <person name="Fischer S.G."/>
            <person name="Segal G."/>
            <person name="Qu X."/>
            <person name="Rzhetsky A."/>
            <person name="Zhang P."/>
            <person name="Cayanis E."/>
            <person name="De Jong P.J."/>
            <person name="Ju J."/>
            <person name="Kalachikov S."/>
            <person name="Shuman H.A."/>
            <person name="Russo J.J."/>
        </authorList>
    </citation>
    <scope>NUCLEOTIDE SEQUENCE [LARGE SCALE GENOMIC DNA]</scope>
    <source>
        <strain>Philadelphia 1 / ATCC 33152 / DSM 7513</strain>
    </source>
</reference>
<organism>
    <name type="scientific">Legionella pneumophila subsp. pneumophila (strain Philadelphia 1 / ATCC 33152 / DSM 7513)</name>
    <dbReference type="NCBI Taxonomy" id="272624"/>
    <lineage>
        <taxon>Bacteria</taxon>
        <taxon>Pseudomonadati</taxon>
        <taxon>Pseudomonadota</taxon>
        <taxon>Gammaproteobacteria</taxon>
        <taxon>Legionellales</taxon>
        <taxon>Legionellaceae</taxon>
        <taxon>Legionella</taxon>
    </lineage>
</organism>
<keyword id="KW-0002">3D-structure</keyword>
<keyword id="KW-0067">ATP-binding</keyword>
<keyword id="KW-0173">Coenzyme A biosynthesis</keyword>
<keyword id="KW-0963">Cytoplasm</keyword>
<keyword id="KW-0418">Kinase</keyword>
<keyword id="KW-0547">Nucleotide-binding</keyword>
<keyword id="KW-1185">Reference proteome</keyword>
<keyword id="KW-0808">Transferase</keyword>
<feature type="chain" id="PRO_0000243302" description="Dephospho-CoA kinase">
    <location>
        <begin position="1"/>
        <end position="201"/>
    </location>
</feature>
<feature type="domain" description="DPCK" evidence="1">
    <location>
        <begin position="4"/>
        <end position="201"/>
    </location>
</feature>
<feature type="binding site" evidence="1">
    <location>
        <begin position="12"/>
        <end position="17"/>
    </location>
    <ligand>
        <name>ATP</name>
        <dbReference type="ChEBI" id="CHEBI:30616"/>
    </ligand>
</feature>
<feature type="strand" evidence="4">
    <location>
        <begin position="4"/>
        <end position="9"/>
    </location>
</feature>
<feature type="helix" evidence="3">
    <location>
        <begin position="11"/>
        <end position="13"/>
    </location>
</feature>
<feature type="helix" evidence="4">
    <location>
        <begin position="15"/>
        <end position="24"/>
    </location>
</feature>
<feature type="strand" evidence="4">
    <location>
        <begin position="28"/>
        <end position="31"/>
    </location>
</feature>
<feature type="helix" evidence="4">
    <location>
        <begin position="32"/>
        <end position="38"/>
    </location>
</feature>
<feature type="helix" evidence="4">
    <location>
        <begin position="45"/>
        <end position="54"/>
    </location>
</feature>
<feature type="helix" evidence="4">
    <location>
        <begin position="56"/>
        <end position="58"/>
    </location>
</feature>
<feature type="strand" evidence="4">
    <location>
        <begin position="63"/>
        <end position="65"/>
    </location>
</feature>
<feature type="helix" evidence="4">
    <location>
        <begin position="67"/>
        <end position="76"/>
    </location>
</feature>
<feature type="helix" evidence="4">
    <location>
        <begin position="78"/>
        <end position="101"/>
    </location>
</feature>
<feature type="strand" evidence="4">
    <location>
        <begin position="105"/>
        <end position="111"/>
    </location>
</feature>
<feature type="helix" evidence="4">
    <location>
        <begin position="118"/>
        <end position="120"/>
    </location>
</feature>
<feature type="strand" evidence="4">
    <location>
        <begin position="125"/>
        <end position="131"/>
    </location>
</feature>
<feature type="helix" evidence="4">
    <location>
        <begin position="134"/>
        <end position="145"/>
    </location>
</feature>
<feature type="helix" evidence="4">
    <location>
        <begin position="149"/>
        <end position="157"/>
    </location>
</feature>
<feature type="helix" evidence="4">
    <location>
        <begin position="163"/>
        <end position="168"/>
    </location>
</feature>
<feature type="strand" evidence="4">
    <location>
        <begin position="170"/>
        <end position="174"/>
    </location>
</feature>
<feature type="helix" evidence="4">
    <location>
        <begin position="178"/>
        <end position="199"/>
    </location>
</feature>
<dbReference type="EC" id="2.7.1.24" evidence="1"/>
<dbReference type="EMBL" id="AE017354">
    <property type="protein sequence ID" value="AAU27549.1"/>
    <property type="status" value="ALT_INIT"/>
    <property type="molecule type" value="Genomic_DNA"/>
</dbReference>
<dbReference type="RefSeq" id="WP_016356910.1">
    <property type="nucleotide sequence ID" value="NC_002942.5"/>
</dbReference>
<dbReference type="RefSeq" id="YP_095496.1">
    <property type="nucleotide sequence ID" value="NC_002942.5"/>
</dbReference>
<dbReference type="PDB" id="4TTP">
    <property type="method" value="X-ray"/>
    <property type="resolution" value="2.20 A"/>
    <property type="chains" value="A=1-201"/>
</dbReference>
<dbReference type="PDB" id="4TTQ">
    <property type="method" value="X-ray"/>
    <property type="resolution" value="2.20 A"/>
    <property type="chains" value="A=1-201"/>
</dbReference>
<dbReference type="PDB" id="4TTR">
    <property type="method" value="X-ray"/>
    <property type="resolution" value="2.10 A"/>
    <property type="chains" value="A=1-201"/>
</dbReference>
<dbReference type="PDBsum" id="4TTP"/>
<dbReference type="PDBsum" id="4TTQ"/>
<dbReference type="PDBsum" id="4TTR"/>
<dbReference type="SMR" id="Q5ZVH3"/>
<dbReference type="STRING" id="272624.lpg1467"/>
<dbReference type="PaxDb" id="272624-lpg1467"/>
<dbReference type="GeneID" id="57035457"/>
<dbReference type="KEGG" id="lpn:lpg1467"/>
<dbReference type="PATRIC" id="fig|272624.6.peg.1539"/>
<dbReference type="eggNOG" id="COG0237">
    <property type="taxonomic scope" value="Bacteria"/>
</dbReference>
<dbReference type="HOGENOM" id="CLU_057180_1_2_6"/>
<dbReference type="OrthoDB" id="9812943at2"/>
<dbReference type="BRENDA" id="2.7.1.24">
    <property type="organism ID" value="2943"/>
</dbReference>
<dbReference type="UniPathway" id="UPA00241">
    <property type="reaction ID" value="UER00356"/>
</dbReference>
<dbReference type="EvolutionaryTrace" id="Q5ZVH3"/>
<dbReference type="Proteomes" id="UP000000609">
    <property type="component" value="Chromosome"/>
</dbReference>
<dbReference type="GO" id="GO:0005737">
    <property type="term" value="C:cytoplasm"/>
    <property type="evidence" value="ECO:0007669"/>
    <property type="project" value="UniProtKB-SubCell"/>
</dbReference>
<dbReference type="GO" id="GO:0005524">
    <property type="term" value="F:ATP binding"/>
    <property type="evidence" value="ECO:0007669"/>
    <property type="project" value="UniProtKB-UniRule"/>
</dbReference>
<dbReference type="GO" id="GO:0004140">
    <property type="term" value="F:dephospho-CoA kinase activity"/>
    <property type="evidence" value="ECO:0007669"/>
    <property type="project" value="UniProtKB-UniRule"/>
</dbReference>
<dbReference type="GO" id="GO:0015937">
    <property type="term" value="P:coenzyme A biosynthetic process"/>
    <property type="evidence" value="ECO:0007669"/>
    <property type="project" value="UniProtKB-UniRule"/>
</dbReference>
<dbReference type="CDD" id="cd02022">
    <property type="entry name" value="DPCK"/>
    <property type="match status" value="1"/>
</dbReference>
<dbReference type="Gene3D" id="3.40.50.300">
    <property type="entry name" value="P-loop containing nucleotide triphosphate hydrolases"/>
    <property type="match status" value="1"/>
</dbReference>
<dbReference type="HAMAP" id="MF_00376">
    <property type="entry name" value="Dephospho_CoA_kinase"/>
    <property type="match status" value="1"/>
</dbReference>
<dbReference type="InterPro" id="IPR001977">
    <property type="entry name" value="Depp_CoAkinase"/>
</dbReference>
<dbReference type="InterPro" id="IPR027417">
    <property type="entry name" value="P-loop_NTPase"/>
</dbReference>
<dbReference type="NCBIfam" id="TIGR00152">
    <property type="entry name" value="dephospho-CoA kinase"/>
    <property type="match status" value="1"/>
</dbReference>
<dbReference type="PANTHER" id="PTHR10695:SF46">
    <property type="entry name" value="BIFUNCTIONAL COENZYME A SYNTHASE-RELATED"/>
    <property type="match status" value="1"/>
</dbReference>
<dbReference type="PANTHER" id="PTHR10695">
    <property type="entry name" value="DEPHOSPHO-COA KINASE-RELATED"/>
    <property type="match status" value="1"/>
</dbReference>
<dbReference type="Pfam" id="PF01121">
    <property type="entry name" value="CoaE"/>
    <property type="match status" value="1"/>
</dbReference>
<dbReference type="SUPFAM" id="SSF52540">
    <property type="entry name" value="P-loop containing nucleoside triphosphate hydrolases"/>
    <property type="match status" value="1"/>
</dbReference>
<dbReference type="PROSITE" id="PS51219">
    <property type="entry name" value="DPCK"/>
    <property type="match status" value="1"/>
</dbReference>
<accession>Q5ZVH3</accession>
<gene>
    <name evidence="1" type="primary">coaE</name>
    <name type="ordered locus">lpg1467</name>
</gene>
<protein>
    <recommendedName>
        <fullName evidence="1">Dephospho-CoA kinase</fullName>
        <ecNumber evidence="1">2.7.1.24</ecNumber>
    </recommendedName>
    <alternativeName>
        <fullName evidence="1">Dephosphocoenzyme A kinase</fullName>
    </alternativeName>
</protein>
<proteinExistence type="evidence at protein level"/>
<sequence>MVYSVGLTGNIASGKSTVAEFFSELGINVIYADKIAKELTSKNTPCYQDIISHFGSSVVLNNGELDRKRIRDIIFSNSNERLWLESLLHPVIRKKIEEQLIVCTSPYCLIEIPLLFNKHHYPYLQKVLLVIAPLESQLDRIVKRDHCTKKQALAILATQPNLEQRLEAADDVLINESGLSELKAKVNKLHQKYLREAKIKQ</sequence>
<name>COAE_LEGPH</name>